<feature type="chain" id="PRO_0000068002" description="Mercuric reductase">
    <location>
        <begin position="1"/>
        <end position="547"/>
    </location>
</feature>
<feature type="domain" description="HMA" evidence="3">
    <location>
        <begin position="4"/>
        <end position="67"/>
    </location>
</feature>
<feature type="binding site" evidence="3">
    <location>
        <position position="15"/>
    </location>
    <ligand>
        <name>a metal cation</name>
        <dbReference type="ChEBI" id="CHEBI:25213"/>
    </ligand>
</feature>
<feature type="binding site" evidence="3">
    <location>
        <position position="18"/>
    </location>
    <ligand>
        <name>a metal cation</name>
        <dbReference type="ChEBI" id="CHEBI:25213"/>
    </ligand>
</feature>
<feature type="binding site" evidence="2">
    <location>
        <position position="97"/>
    </location>
    <ligand>
        <name>FAD</name>
        <dbReference type="ChEBI" id="CHEBI:57692"/>
    </ligand>
</feature>
<feature type="binding site" evidence="2">
    <location>
        <position position="117"/>
    </location>
    <ligand>
        <name>FAD</name>
        <dbReference type="ChEBI" id="CHEBI:57692"/>
    </ligand>
</feature>
<feature type="binding site" evidence="2">
    <location>
        <position position="122"/>
    </location>
    <ligand>
        <name>FAD</name>
        <dbReference type="ChEBI" id="CHEBI:57692"/>
    </ligand>
</feature>
<feature type="binding site" evidence="2">
    <location>
        <position position="132"/>
    </location>
    <ligand>
        <name>FAD</name>
        <dbReference type="ChEBI" id="CHEBI:57692"/>
    </ligand>
</feature>
<feature type="binding site" evidence="2">
    <location>
        <position position="196"/>
    </location>
    <ligand>
        <name>FAD</name>
        <dbReference type="ChEBI" id="CHEBI:57692"/>
    </ligand>
</feature>
<feature type="binding site" evidence="2">
    <location>
        <position position="388"/>
    </location>
    <ligand>
        <name>FAD</name>
        <dbReference type="ChEBI" id="CHEBI:57692"/>
    </ligand>
</feature>
<feature type="binding site" evidence="2">
    <location>
        <position position="396"/>
    </location>
    <ligand>
        <name>FAD</name>
        <dbReference type="ChEBI" id="CHEBI:57692"/>
    </ligand>
</feature>
<feature type="binding site" evidence="2">
    <location>
        <position position="544"/>
    </location>
    <ligand>
        <name>Hg(2+)</name>
        <dbReference type="ChEBI" id="CHEBI:16793"/>
    </ligand>
</feature>
<feature type="binding site" evidence="2">
    <location>
        <position position="545"/>
    </location>
    <ligand>
        <name>Hg(2+)</name>
        <dbReference type="ChEBI" id="CHEBI:16793"/>
    </ligand>
</feature>
<feature type="disulfide bond" description="Redox-active" evidence="1">
    <location>
        <begin position="123"/>
        <end position="128"/>
    </location>
</feature>
<reference key="1">
    <citation type="journal article" date="1987" name="Proc. Natl. Acad. Sci. U.S.A.">
        <title>Nucleotide sequence and expression of the mercurial-resistance operon from Staphylococcus aureus plasmid pI258.</title>
        <authorList>
            <person name="Laddaga R.A."/>
            <person name="Chu L."/>
            <person name="Misra T.K."/>
            <person name="Silver S."/>
        </authorList>
    </citation>
    <scope>NUCLEOTIDE SEQUENCE [GENOMIC DNA]</scope>
</reference>
<comment type="function">
    <text evidence="2">Resistance to Hg(2+) in bacteria appears to be governed by a specialized system which includes mercuric reductase. MerA protein is responsible for volatilizing mercury as Hg(0) (By similarity).</text>
</comment>
<comment type="catalytic activity">
    <reaction evidence="2">
        <text>Hg + NADP(+) + H(+) = Hg(2+) + NADPH</text>
        <dbReference type="Rhea" id="RHEA:23856"/>
        <dbReference type="ChEBI" id="CHEBI:15378"/>
        <dbReference type="ChEBI" id="CHEBI:16170"/>
        <dbReference type="ChEBI" id="CHEBI:16793"/>
        <dbReference type="ChEBI" id="CHEBI:57783"/>
        <dbReference type="ChEBI" id="CHEBI:58349"/>
        <dbReference type="EC" id="1.16.1.1"/>
    </reaction>
</comment>
<comment type="cofactor">
    <cofactor evidence="2">
        <name>FAD</name>
        <dbReference type="ChEBI" id="CHEBI:57692"/>
    </cofactor>
    <text evidence="2">Binds 1 FAD per subunit.</text>
</comment>
<comment type="subunit">
    <text evidence="2">Homodimer.</text>
</comment>
<comment type="miscellaneous">
    <text evidence="2">The active site is a redox-active disulfide bond.</text>
</comment>
<comment type="similarity">
    <text evidence="4">Belongs to the class-I pyridine nucleotide-disulfide oxidoreductase family.</text>
</comment>
<proteinExistence type="inferred from homology"/>
<dbReference type="EC" id="1.16.1.1" evidence="2"/>
<dbReference type="EMBL" id="L29436">
    <property type="protein sequence ID" value="AAA98245.1"/>
    <property type="molecule type" value="Genomic_DNA"/>
</dbReference>
<dbReference type="PIR" id="E29504">
    <property type="entry name" value="E29504"/>
</dbReference>
<dbReference type="RefSeq" id="WP_000193219.1">
    <property type="nucleotide sequence ID" value="NZ_WBTO01000038.1"/>
</dbReference>
<dbReference type="RefSeq" id="YP_006937593.1">
    <property type="nucleotide sequence ID" value="NC_013319.1"/>
</dbReference>
<dbReference type="RefSeq" id="YP_006938295.1">
    <property type="nucleotide sequence ID" value="NC_013337.1"/>
</dbReference>
<dbReference type="RefSeq" id="YP_006938628.1">
    <property type="nucleotide sequence ID" value="NC_013347.1"/>
</dbReference>
<dbReference type="RefSeq" id="YP_006938790.1">
    <property type="nucleotide sequence ID" value="NC_013352.1"/>
</dbReference>
<dbReference type="RefSeq" id="YP_006958467.1">
    <property type="nucleotide sequence ID" value="NC_018968.1"/>
</dbReference>
<dbReference type="SMR" id="P0A0E5"/>
<dbReference type="OMA" id="AGIRCEC"/>
<dbReference type="GO" id="GO:0050660">
    <property type="term" value="F:flavin adenine dinucleotide binding"/>
    <property type="evidence" value="ECO:0007669"/>
    <property type="project" value="InterPro"/>
</dbReference>
<dbReference type="GO" id="GO:0016152">
    <property type="term" value="F:mercury (II) reductase (NADP+) activity"/>
    <property type="evidence" value="ECO:0007669"/>
    <property type="project" value="UniProtKB-EC"/>
</dbReference>
<dbReference type="GO" id="GO:0045340">
    <property type="term" value="F:mercury ion binding"/>
    <property type="evidence" value="ECO:0007669"/>
    <property type="project" value="InterPro"/>
</dbReference>
<dbReference type="GO" id="GO:0003955">
    <property type="term" value="F:NAD(P)H dehydrogenase (quinone) activity"/>
    <property type="evidence" value="ECO:0007669"/>
    <property type="project" value="TreeGrafter"/>
</dbReference>
<dbReference type="GO" id="GO:0050661">
    <property type="term" value="F:NADP binding"/>
    <property type="evidence" value="ECO:0007669"/>
    <property type="project" value="InterPro"/>
</dbReference>
<dbReference type="GO" id="GO:0016668">
    <property type="term" value="F:oxidoreductase activity, acting on a sulfur group of donors, NAD(P) as acceptor"/>
    <property type="evidence" value="ECO:0007669"/>
    <property type="project" value="InterPro"/>
</dbReference>
<dbReference type="GO" id="GO:0050787">
    <property type="term" value="P:detoxification of mercury ion"/>
    <property type="evidence" value="ECO:0007669"/>
    <property type="project" value="InterPro"/>
</dbReference>
<dbReference type="CDD" id="cd00371">
    <property type="entry name" value="HMA"/>
    <property type="match status" value="1"/>
</dbReference>
<dbReference type="FunFam" id="3.30.390.30:FF:000001">
    <property type="entry name" value="Dihydrolipoyl dehydrogenase"/>
    <property type="match status" value="1"/>
</dbReference>
<dbReference type="Gene3D" id="3.30.390.30">
    <property type="match status" value="1"/>
</dbReference>
<dbReference type="Gene3D" id="3.30.70.100">
    <property type="match status" value="1"/>
</dbReference>
<dbReference type="Gene3D" id="3.50.50.60">
    <property type="entry name" value="FAD/NAD(P)-binding domain"/>
    <property type="match status" value="2"/>
</dbReference>
<dbReference type="InterPro" id="IPR036188">
    <property type="entry name" value="FAD/NAD-bd_sf"/>
</dbReference>
<dbReference type="InterPro" id="IPR023753">
    <property type="entry name" value="FAD/NAD-binding_dom"/>
</dbReference>
<dbReference type="InterPro" id="IPR016156">
    <property type="entry name" value="FAD/NAD-linked_Rdtase_dimer_sf"/>
</dbReference>
<dbReference type="InterPro" id="IPR017969">
    <property type="entry name" value="Heavy-metal-associated_CS"/>
</dbReference>
<dbReference type="InterPro" id="IPR006121">
    <property type="entry name" value="HMA_dom"/>
</dbReference>
<dbReference type="InterPro" id="IPR036163">
    <property type="entry name" value="HMA_dom_sf"/>
</dbReference>
<dbReference type="InterPro" id="IPR021179">
    <property type="entry name" value="Mercury_reductase_MerA"/>
</dbReference>
<dbReference type="InterPro" id="IPR001100">
    <property type="entry name" value="Pyr_nuc-diS_OxRdtase"/>
</dbReference>
<dbReference type="InterPro" id="IPR004099">
    <property type="entry name" value="Pyr_nucl-diS_OxRdtase_dimer"/>
</dbReference>
<dbReference type="InterPro" id="IPR012999">
    <property type="entry name" value="Pyr_OxRdtase_I_AS"/>
</dbReference>
<dbReference type="NCBIfam" id="TIGR02053">
    <property type="entry name" value="MerA"/>
    <property type="match status" value="1"/>
</dbReference>
<dbReference type="PANTHER" id="PTHR43014">
    <property type="entry name" value="MERCURIC REDUCTASE"/>
    <property type="match status" value="1"/>
</dbReference>
<dbReference type="PANTHER" id="PTHR43014:SF4">
    <property type="entry name" value="PYRIDINE NUCLEOTIDE-DISULFIDE OXIDOREDUCTASE RCLA-RELATED"/>
    <property type="match status" value="1"/>
</dbReference>
<dbReference type="Pfam" id="PF00403">
    <property type="entry name" value="HMA"/>
    <property type="match status" value="1"/>
</dbReference>
<dbReference type="Pfam" id="PF07992">
    <property type="entry name" value="Pyr_redox_2"/>
    <property type="match status" value="1"/>
</dbReference>
<dbReference type="Pfam" id="PF02852">
    <property type="entry name" value="Pyr_redox_dim"/>
    <property type="match status" value="1"/>
</dbReference>
<dbReference type="PIRSF" id="PIRSF000350">
    <property type="entry name" value="Mercury_reductase_MerA"/>
    <property type="match status" value="1"/>
</dbReference>
<dbReference type="PRINTS" id="PR00945">
    <property type="entry name" value="HGRDTASE"/>
</dbReference>
<dbReference type="SUPFAM" id="SSF51905">
    <property type="entry name" value="FAD/NAD(P)-binding domain"/>
    <property type="match status" value="1"/>
</dbReference>
<dbReference type="SUPFAM" id="SSF55424">
    <property type="entry name" value="FAD/NAD-linked reductases, dimerisation (C-terminal) domain"/>
    <property type="match status" value="1"/>
</dbReference>
<dbReference type="SUPFAM" id="SSF55008">
    <property type="entry name" value="HMA, heavy metal-associated domain"/>
    <property type="match status" value="1"/>
</dbReference>
<dbReference type="PROSITE" id="PS01047">
    <property type="entry name" value="HMA_1"/>
    <property type="match status" value="1"/>
</dbReference>
<dbReference type="PROSITE" id="PS50846">
    <property type="entry name" value="HMA_2"/>
    <property type="match status" value="1"/>
</dbReference>
<dbReference type="PROSITE" id="PS00076">
    <property type="entry name" value="PYRIDINE_REDOX_1"/>
    <property type="match status" value="1"/>
</dbReference>
<name>MERA_STAAU</name>
<gene>
    <name type="primary">merA</name>
</gene>
<accession>P0A0E5</accession>
<accession>P08663</accession>
<geneLocation type="plasmid">
    <name>pI258</name>
</geneLocation>
<organism>
    <name type="scientific">Staphylococcus aureus</name>
    <dbReference type="NCBI Taxonomy" id="1280"/>
    <lineage>
        <taxon>Bacteria</taxon>
        <taxon>Bacillati</taxon>
        <taxon>Bacillota</taxon>
        <taxon>Bacilli</taxon>
        <taxon>Bacillales</taxon>
        <taxon>Staphylococcaceae</taxon>
        <taxon>Staphylococcus</taxon>
    </lineage>
</organism>
<protein>
    <recommendedName>
        <fullName>Mercuric reductase</fullName>
        <ecNumber evidence="2">1.16.1.1</ecNumber>
    </recommendedName>
    <alternativeName>
        <fullName>Hg(II) reductase</fullName>
    </alternativeName>
</protein>
<keyword id="KW-1015">Disulfide bond</keyword>
<keyword id="KW-0274">FAD</keyword>
<keyword id="KW-0285">Flavoprotein</keyword>
<keyword id="KW-0475">Mercuric resistance</keyword>
<keyword id="KW-0476">Mercury</keyword>
<keyword id="KW-0479">Metal-binding</keyword>
<keyword id="KW-0521">NADP</keyword>
<keyword id="KW-0560">Oxidoreductase</keyword>
<keyword id="KW-0614">Plasmid</keyword>
<keyword id="KW-0676">Redox-active center</keyword>
<evidence type="ECO:0000250" key="1"/>
<evidence type="ECO:0000250" key="2">
    <source>
        <dbReference type="UniProtKB" id="P00392"/>
    </source>
</evidence>
<evidence type="ECO:0000255" key="3">
    <source>
        <dbReference type="PROSITE-ProRule" id="PRU00280"/>
    </source>
</evidence>
<evidence type="ECO:0000305" key="4"/>
<sequence length="547" mass="58566">MTQNSYKIPIQGMTCTGCEEHVTEALEQAGAKDVSADFRRGEAIFELSDDQIEKAKQNISAAGYQPGEEESQPSENSVDFNRDGDYDLLIIGSGGAAFSAAIKANENGAKVAMVERGTVGGTCVNIGCVPSKTMLRAGEINGLAQNNPFTGLQTSTGAADLAQLTEQKDGLVSQMRQEKYIDLIEEYGFDLIRGEASFIDDKTIQVNGQNITSKSFLIATGASPAVPEIPGMNEVDYLTSTSALELKEVPQRLAVIGSGYIAAELGQMFHNLGTEVTLMQRSERLFKTYDPEISEAIDESLTEQGLNLITGVTYQKVEQNGKSTSIYIEVNGQEQVIEADQVLVATGRKPNTETLNLESAGVKTGKKGEVLTNEYLQTSNNRIYAAGDVTLGPQFVYVAAYEGGIVANNALGLAKRKIDLRFVPGVTFTNPSIATVGLTEQQAKEKGYDVKTSVLPLDAVPRALVNHETTGVYKLVVNAQTQKLIGAHIVSENAGDVIYAATLAVQFGLTIEDLTDSFAPYLTMAEGLKLAALTFDKDVSKLSCCAG</sequence>